<organism>
    <name type="scientific">Thermothielavioides terrestris (strain ATCC 38088 / NRRL 8126)</name>
    <name type="common">Thielavia terrestris</name>
    <dbReference type="NCBI Taxonomy" id="578455"/>
    <lineage>
        <taxon>Eukaryota</taxon>
        <taxon>Fungi</taxon>
        <taxon>Dikarya</taxon>
        <taxon>Ascomycota</taxon>
        <taxon>Pezizomycotina</taxon>
        <taxon>Sordariomycetes</taxon>
        <taxon>Sordariomycetidae</taxon>
        <taxon>Sordariales</taxon>
        <taxon>Chaetomiaceae</taxon>
        <taxon>Thermothielavioides</taxon>
        <taxon>Thermothielavioides terrestris</taxon>
    </lineage>
</organism>
<reference key="1">
    <citation type="journal article" date="2011" name="Nat. Biotechnol.">
        <title>Comparative genomic analysis of the thermophilic biomass-degrading fungi Myceliophthora thermophila and Thielavia terrestris.</title>
        <authorList>
            <person name="Berka R.M."/>
            <person name="Grigoriev I.V."/>
            <person name="Otillar R."/>
            <person name="Salamov A."/>
            <person name="Grimwood J."/>
            <person name="Reid I."/>
            <person name="Ishmael N."/>
            <person name="John T."/>
            <person name="Darmond C."/>
            <person name="Moisan M.-C."/>
            <person name="Henrissat B."/>
            <person name="Coutinho P.M."/>
            <person name="Lombard V."/>
            <person name="Natvig D.O."/>
            <person name="Lindquist E."/>
            <person name="Schmutz J."/>
            <person name="Lucas S."/>
            <person name="Harris P."/>
            <person name="Powlowski J."/>
            <person name="Bellemare A."/>
            <person name="Taylor D."/>
            <person name="Butler G."/>
            <person name="de Vries R.P."/>
            <person name="Allijn I.E."/>
            <person name="van den Brink J."/>
            <person name="Ushinsky S."/>
            <person name="Storms R."/>
            <person name="Powell A.J."/>
            <person name="Paulsen I.T."/>
            <person name="Elbourne L.D.H."/>
            <person name="Baker S.E."/>
            <person name="Magnuson J."/>
            <person name="LaBoissiere S."/>
            <person name="Clutterbuck A.J."/>
            <person name="Martinez D."/>
            <person name="Wogulis M."/>
            <person name="de Leon A.L."/>
            <person name="Rey M.W."/>
            <person name="Tsang A."/>
        </authorList>
    </citation>
    <scope>NUCLEOTIDE SEQUENCE [LARGE SCALE GENOMIC DNA]</scope>
    <source>
        <strain>ATCC 38088 / NRRL 8126</strain>
    </source>
</reference>
<reference key="2">
    <citation type="journal article" date="2022" name="Appl. Environ. Microbiol.">
        <title>Comparison of six lytic polysaccharide monooxygenases from Thermothielavioides terrestris shows that functional variation underlies the multiplicity of LPMO genes in filamentous fungi.</title>
        <authorList>
            <person name="Tolgo M."/>
            <person name="Hegnar O.A."/>
            <person name="Oestby H."/>
            <person name="Varnai A."/>
            <person name="Vilaplana F."/>
            <person name="Eijsink V.G.H."/>
            <person name="Olsson L."/>
        </authorList>
    </citation>
    <scope>FUNCTION</scope>
    <scope>CATALYTIC ACTIVITY</scope>
</reference>
<keyword id="KW-0119">Carbohydrate metabolism</keyword>
<keyword id="KW-0136">Cellulose degradation</keyword>
<keyword id="KW-0186">Copper</keyword>
<keyword id="KW-1015">Disulfide bond</keyword>
<keyword id="KW-0479">Metal-binding</keyword>
<keyword id="KW-0503">Monooxygenase</keyword>
<keyword id="KW-0560">Oxidoreductase</keyword>
<keyword id="KW-0624">Polysaccharide degradation</keyword>
<keyword id="KW-1185">Reference proteome</keyword>
<keyword id="KW-0964">Secreted</keyword>
<keyword id="KW-0732">Signal</keyword>
<accession>G2RB73</accession>
<comment type="function">
    <text evidence="8">Lytic polysaccharide monooxygenase (LPMO) that depolymerizes crystalline and amorphous polysaccharides via the oxidation of scissile alpha- or beta-(1-4)-glycosidic bonds, yielding C1 and C4 oxidation products (PubMed:35080911). Catalysis by LPMOs requires the reduction of the active-site copper from Cu(II) to Cu(I) by a reducing agent and H(2)O(2) or O(2) as a cosubstrate (PubMed:35080911). Shows no activity on wheat arabinoxylan, konjac glucomannan, acetylated spruce galactoglucomannan, or cellopentaose (PubMed:35080911).</text>
</comment>
<comment type="catalytic activity">
    <reaction evidence="8">
        <text>[(1-&gt;4)-beta-D-glucosyl]n+m + reduced acceptor + O2 = 4-dehydro-beta-D-glucosyl-[(1-&gt;4)-beta-D-glucosyl]n-1 + [(1-&gt;4)-beta-D-glucosyl]m + acceptor + H2O.</text>
        <dbReference type="EC" id="1.14.99.56"/>
    </reaction>
</comment>
<comment type="cofactor">
    <cofactor evidence="11">
        <name>Cu(2+)</name>
        <dbReference type="ChEBI" id="CHEBI:29036"/>
    </cofactor>
    <text evidence="11">Binds 1 copper ion per subunit.</text>
</comment>
<comment type="subcellular location">
    <subcellularLocation>
        <location evidence="11">Secreted</location>
    </subcellularLocation>
</comment>
<comment type="domain">
    <text evidence="1">Has a modular structure: an endo-beta-1,4-glucanase catalytic module at the N-terminus, a linker rich in serines and threonines, and a C-terminal carbohydrate-binding module (CBM). The genes for catalytic modules and CBMs seem to have evolved separately and have been linked by gene fusion.</text>
</comment>
<comment type="biotechnology">
    <text evidence="11">Lignocellulose is the most abundant polymeric composite on Earth and is a recalcitrant but promising renewable substrate for industrial biotechnology applications. Together with cellobiose dehydrogenases (CDHs) an enzymatic system capable of oxidative cellulose cleavage is formed, which increases the efficiency of cellulases and put LPMOs at focus of biofuel research.</text>
</comment>
<comment type="similarity">
    <text evidence="10">Belongs to the polysaccharide monooxygenase AA9 family.</text>
</comment>
<evidence type="ECO:0000250" key="1">
    <source>
        <dbReference type="UniProtKB" id="A0A384JJB6"/>
    </source>
</evidence>
<evidence type="ECO:0000250" key="2">
    <source>
        <dbReference type="UniProtKB" id="Q1K8B6"/>
    </source>
</evidence>
<evidence type="ECO:0000250" key="3">
    <source>
        <dbReference type="UniProtKB" id="Q4WP32"/>
    </source>
</evidence>
<evidence type="ECO:0000250" key="4">
    <source>
        <dbReference type="UniProtKB" id="Q7Z9M7"/>
    </source>
</evidence>
<evidence type="ECO:0000255" key="5"/>
<evidence type="ECO:0000255" key="6">
    <source>
        <dbReference type="PROSITE-ProRule" id="PRU00597"/>
    </source>
</evidence>
<evidence type="ECO:0000256" key="7">
    <source>
        <dbReference type="SAM" id="MobiDB-lite"/>
    </source>
</evidence>
<evidence type="ECO:0000269" key="8">
    <source>
    </source>
</evidence>
<evidence type="ECO:0000303" key="9">
    <source>
    </source>
</evidence>
<evidence type="ECO:0000305" key="10"/>
<evidence type="ECO:0000305" key="11">
    <source>
    </source>
</evidence>
<dbReference type="EC" id="1.14.99.56" evidence="8"/>
<dbReference type="EMBL" id="CP003012">
    <property type="protein sequence ID" value="AEO69044.1"/>
    <property type="molecule type" value="Genomic_DNA"/>
</dbReference>
<dbReference type="RefSeq" id="XP_003655380.1">
    <property type="nucleotide sequence ID" value="XM_003655332.1"/>
</dbReference>
<dbReference type="SMR" id="G2RB73"/>
<dbReference type="STRING" id="578455.G2RB73"/>
<dbReference type="GeneID" id="11524534"/>
<dbReference type="KEGG" id="ttt:THITE_2119040"/>
<dbReference type="eggNOG" id="ENOG502QRTW">
    <property type="taxonomic scope" value="Eukaryota"/>
</dbReference>
<dbReference type="HOGENOM" id="CLU_031730_0_1_1"/>
<dbReference type="OrthoDB" id="3238762at2759"/>
<dbReference type="Proteomes" id="UP000008181">
    <property type="component" value="Chromosome 4"/>
</dbReference>
<dbReference type="GO" id="GO:0005576">
    <property type="term" value="C:extracellular region"/>
    <property type="evidence" value="ECO:0007669"/>
    <property type="project" value="UniProtKB-SubCell"/>
</dbReference>
<dbReference type="GO" id="GO:0030248">
    <property type="term" value="F:cellulose binding"/>
    <property type="evidence" value="ECO:0007669"/>
    <property type="project" value="InterPro"/>
</dbReference>
<dbReference type="GO" id="GO:0046872">
    <property type="term" value="F:metal ion binding"/>
    <property type="evidence" value="ECO:0007669"/>
    <property type="project" value="UniProtKB-KW"/>
</dbReference>
<dbReference type="GO" id="GO:0004497">
    <property type="term" value="F:monooxygenase activity"/>
    <property type="evidence" value="ECO:0007669"/>
    <property type="project" value="UniProtKB-KW"/>
</dbReference>
<dbReference type="GO" id="GO:0030245">
    <property type="term" value="P:cellulose catabolic process"/>
    <property type="evidence" value="ECO:0007669"/>
    <property type="project" value="UniProtKB-KW"/>
</dbReference>
<dbReference type="CDD" id="cd21175">
    <property type="entry name" value="LPMO_AA9"/>
    <property type="match status" value="1"/>
</dbReference>
<dbReference type="Gene3D" id="2.70.50.70">
    <property type="match status" value="1"/>
</dbReference>
<dbReference type="InterPro" id="IPR049892">
    <property type="entry name" value="AA9"/>
</dbReference>
<dbReference type="InterPro" id="IPR005103">
    <property type="entry name" value="AA9_LPMO"/>
</dbReference>
<dbReference type="InterPro" id="IPR035971">
    <property type="entry name" value="CBD_sf"/>
</dbReference>
<dbReference type="InterPro" id="IPR000254">
    <property type="entry name" value="Cellulose-bd_dom_fun"/>
</dbReference>
<dbReference type="PANTHER" id="PTHR33353:SF9">
    <property type="entry name" value="ENDOGLUCANASE II"/>
    <property type="match status" value="1"/>
</dbReference>
<dbReference type="PANTHER" id="PTHR33353">
    <property type="entry name" value="PUTATIVE (AFU_ORTHOLOGUE AFUA_1G12560)-RELATED"/>
    <property type="match status" value="1"/>
</dbReference>
<dbReference type="Pfam" id="PF03443">
    <property type="entry name" value="AA9"/>
    <property type="match status" value="1"/>
</dbReference>
<dbReference type="Pfam" id="PF00734">
    <property type="entry name" value="CBM_1"/>
    <property type="match status" value="1"/>
</dbReference>
<dbReference type="SMART" id="SM00236">
    <property type="entry name" value="fCBD"/>
    <property type="match status" value="1"/>
</dbReference>
<dbReference type="SUPFAM" id="SSF57180">
    <property type="entry name" value="Cellulose-binding domain"/>
    <property type="match status" value="1"/>
</dbReference>
<dbReference type="PROSITE" id="PS51164">
    <property type="entry name" value="CBM1_2"/>
    <property type="match status" value="1"/>
</dbReference>
<protein>
    <recommendedName>
        <fullName evidence="9">AA9 family lytic polysaccharide monooxygenase B</fullName>
        <shortName evidence="9">LPMO9B</shortName>
        <ecNumber evidence="8">1.14.99.56</ecNumber>
    </recommendedName>
    <alternativeName>
        <fullName evidence="10">Endo-1,4-beta-glucanase LPMO9B</fullName>
        <shortName evidence="10">Endoglucanase LPMO9B</shortName>
    </alternativeName>
    <alternativeName>
        <fullName evidence="10">Glycosyl hydrolase 61 family protein LPMO9B</fullName>
    </alternativeName>
</protein>
<proteinExistence type="evidence at protein level"/>
<feature type="signal peptide" evidence="5">
    <location>
        <begin position="1"/>
        <end position="19"/>
    </location>
</feature>
<feature type="chain" id="PRO_5003437096" description="AA9 family lytic polysaccharide monooxygenase B">
    <location>
        <begin position="20"/>
        <end position="326"/>
    </location>
</feature>
<feature type="domain" description="CBM1" evidence="6">
    <location>
        <begin position="289"/>
        <end position="326"/>
    </location>
</feature>
<feature type="region of interest" description="Disordered" evidence="7">
    <location>
        <begin position="265"/>
        <end position="286"/>
    </location>
</feature>
<feature type="compositionally biased region" description="Low complexity" evidence="7">
    <location>
        <begin position="265"/>
        <end position="281"/>
    </location>
</feature>
<feature type="binding site" evidence="3">
    <location>
        <position position="20"/>
    </location>
    <ligand>
        <name>Cu(2+)</name>
        <dbReference type="ChEBI" id="CHEBI:29036"/>
    </ligand>
</feature>
<feature type="binding site" evidence="3">
    <location>
        <position position="98"/>
    </location>
    <ligand>
        <name>Cu(2+)</name>
        <dbReference type="ChEBI" id="CHEBI:29036"/>
    </ligand>
</feature>
<feature type="binding site" evidence="2">
    <location>
        <position position="178"/>
    </location>
    <ligand>
        <name>O2</name>
        <dbReference type="ChEBI" id="CHEBI:15379"/>
    </ligand>
</feature>
<feature type="binding site" evidence="2">
    <location>
        <position position="187"/>
    </location>
    <ligand>
        <name>O2</name>
        <dbReference type="ChEBI" id="CHEBI:15379"/>
    </ligand>
</feature>
<feature type="binding site" evidence="3">
    <location>
        <position position="189"/>
    </location>
    <ligand>
        <name>Cu(2+)</name>
        <dbReference type="ChEBI" id="CHEBI:29036"/>
    </ligand>
</feature>
<feature type="disulfide bond" evidence="4">
    <location>
        <begin position="57"/>
        <end position="192"/>
    </location>
</feature>
<gene>
    <name evidence="9" type="primary">LPMO9B</name>
    <name type="ORF">THITE_2119040</name>
</gene>
<sequence>MKSFTIAALAALWAQEAAAHATFQDLWIDGVDYGSQCVRLPASNSPVTNVASDDIRCNVGTSRPTVKCPVKAGSTVTIEMHQQPGDRSCANEAIGGDHYGPVMVYMSKVDDAVTADGSSGWFKVFQDSWAKNPSGSTGDDDYWGTKDLNSCCGKMNVKIPEDIEPGDYLLRAEVIALHVAASSGGAQFYMSCYQLTVTGSGSATPSTVNFPGAYSASDPGILINIHAPMSTYVVPGPTVYAGGSTKSAGSSCSGCEATCTVGSGPSATLTQPTSTATATSAPGGGGSGCTAAKYQQCGGTGYTGCTTCASGSTCSAVSPPYYSQCL</sequence>
<name>LP9B_THETT</name>